<name>PYRF_DELAS</name>
<evidence type="ECO:0000255" key="1">
    <source>
        <dbReference type="HAMAP-Rule" id="MF_01215"/>
    </source>
</evidence>
<sequence length="275" mass="29285">MTFLDMLRNATAQNQSMLCVGLDPEPSRFPAAMRGDASKIYDFCAAIVDATADLVNSFKPQIAYFAAHRAEDQLEKLMAHMRAVAPHVPIILDAKRGDIGSTAEQYAKEAFERYGADAVTLSPFMGFDSITPYLQYEGKGAFLLCRTSNPGGDDLQAQRLADLPGQPHLFEHVARLAQGPWNTNGQLGLVVGATRPQEIERVREFAPSLPLLIPGVGAQGGDAVATVKAARIGGGPIIINSSRAVLYASQGDDFAAAARTAAQATRQTLQDAAAA</sequence>
<protein>
    <recommendedName>
        <fullName evidence="1">Orotidine 5'-phosphate decarboxylase</fullName>
        <ecNumber evidence="1">4.1.1.23</ecNumber>
    </recommendedName>
    <alternativeName>
        <fullName evidence="1">OMP decarboxylase</fullName>
        <shortName evidence="1">OMPDCase</shortName>
        <shortName evidence="1">OMPdecase</shortName>
    </alternativeName>
</protein>
<organism>
    <name type="scientific">Delftia acidovorans (strain DSM 14801 / SPH-1)</name>
    <dbReference type="NCBI Taxonomy" id="398578"/>
    <lineage>
        <taxon>Bacteria</taxon>
        <taxon>Pseudomonadati</taxon>
        <taxon>Pseudomonadota</taxon>
        <taxon>Betaproteobacteria</taxon>
        <taxon>Burkholderiales</taxon>
        <taxon>Comamonadaceae</taxon>
        <taxon>Delftia</taxon>
    </lineage>
</organism>
<comment type="catalytic activity">
    <reaction evidence="1">
        <text>orotidine 5'-phosphate + H(+) = UMP + CO2</text>
        <dbReference type="Rhea" id="RHEA:11596"/>
        <dbReference type="ChEBI" id="CHEBI:15378"/>
        <dbReference type="ChEBI" id="CHEBI:16526"/>
        <dbReference type="ChEBI" id="CHEBI:57538"/>
        <dbReference type="ChEBI" id="CHEBI:57865"/>
        <dbReference type="EC" id="4.1.1.23"/>
    </reaction>
</comment>
<comment type="pathway">
    <text evidence="1">Pyrimidine metabolism; UMP biosynthesis via de novo pathway; UMP from orotate: step 2/2.</text>
</comment>
<comment type="similarity">
    <text evidence="1">Belongs to the OMP decarboxylase family. Type 2 subfamily.</text>
</comment>
<accession>A9BS60</accession>
<proteinExistence type="inferred from homology"/>
<dbReference type="EC" id="4.1.1.23" evidence="1"/>
<dbReference type="EMBL" id="CP000884">
    <property type="protein sequence ID" value="ABX33470.1"/>
    <property type="molecule type" value="Genomic_DNA"/>
</dbReference>
<dbReference type="RefSeq" id="WP_012202756.1">
    <property type="nucleotide sequence ID" value="NC_010002.1"/>
</dbReference>
<dbReference type="SMR" id="A9BS60"/>
<dbReference type="STRING" id="398578.Daci_0824"/>
<dbReference type="GeneID" id="24118182"/>
<dbReference type="KEGG" id="dac:Daci_0824"/>
<dbReference type="eggNOG" id="COG0284">
    <property type="taxonomic scope" value="Bacteria"/>
</dbReference>
<dbReference type="HOGENOM" id="CLU_060704_1_0_4"/>
<dbReference type="UniPathway" id="UPA00070">
    <property type="reaction ID" value="UER00120"/>
</dbReference>
<dbReference type="Proteomes" id="UP000000784">
    <property type="component" value="Chromosome"/>
</dbReference>
<dbReference type="GO" id="GO:0004590">
    <property type="term" value="F:orotidine-5'-phosphate decarboxylase activity"/>
    <property type="evidence" value="ECO:0007669"/>
    <property type="project" value="UniProtKB-UniRule"/>
</dbReference>
<dbReference type="GO" id="GO:0006207">
    <property type="term" value="P:'de novo' pyrimidine nucleobase biosynthetic process"/>
    <property type="evidence" value="ECO:0007669"/>
    <property type="project" value="InterPro"/>
</dbReference>
<dbReference type="GO" id="GO:0044205">
    <property type="term" value="P:'de novo' UMP biosynthetic process"/>
    <property type="evidence" value="ECO:0007669"/>
    <property type="project" value="UniProtKB-UniRule"/>
</dbReference>
<dbReference type="CDD" id="cd04725">
    <property type="entry name" value="OMP_decarboxylase_like"/>
    <property type="match status" value="1"/>
</dbReference>
<dbReference type="Gene3D" id="3.20.20.70">
    <property type="entry name" value="Aldolase class I"/>
    <property type="match status" value="1"/>
</dbReference>
<dbReference type="HAMAP" id="MF_01215">
    <property type="entry name" value="OMPdecase_type2"/>
    <property type="match status" value="1"/>
</dbReference>
<dbReference type="InterPro" id="IPR013785">
    <property type="entry name" value="Aldolase_TIM"/>
</dbReference>
<dbReference type="InterPro" id="IPR018089">
    <property type="entry name" value="OMPdecase_AS"/>
</dbReference>
<dbReference type="InterPro" id="IPR011995">
    <property type="entry name" value="OMPdecase_type-2"/>
</dbReference>
<dbReference type="InterPro" id="IPR001754">
    <property type="entry name" value="OMPdeCOase_dom"/>
</dbReference>
<dbReference type="InterPro" id="IPR011060">
    <property type="entry name" value="RibuloseP-bd_barrel"/>
</dbReference>
<dbReference type="NCBIfam" id="TIGR02127">
    <property type="entry name" value="pyrF_sub2"/>
    <property type="match status" value="1"/>
</dbReference>
<dbReference type="PANTHER" id="PTHR43375">
    <property type="entry name" value="OROTIDINE 5'-PHOSPHATE DECARBOXYLASE"/>
    <property type="match status" value="1"/>
</dbReference>
<dbReference type="PANTHER" id="PTHR43375:SF1">
    <property type="entry name" value="OROTIDINE 5'-PHOSPHATE DECARBOXYLASE"/>
    <property type="match status" value="1"/>
</dbReference>
<dbReference type="Pfam" id="PF00215">
    <property type="entry name" value="OMPdecase"/>
    <property type="match status" value="1"/>
</dbReference>
<dbReference type="SMART" id="SM00934">
    <property type="entry name" value="OMPdecase"/>
    <property type="match status" value="1"/>
</dbReference>
<dbReference type="SUPFAM" id="SSF51366">
    <property type="entry name" value="Ribulose-phoshate binding barrel"/>
    <property type="match status" value="1"/>
</dbReference>
<dbReference type="PROSITE" id="PS00156">
    <property type="entry name" value="OMPDECASE"/>
    <property type="match status" value="1"/>
</dbReference>
<reference key="1">
    <citation type="submission" date="2007-11" db="EMBL/GenBank/DDBJ databases">
        <title>Complete sequence of Delftia acidovorans DSM 14801 / SPH-1.</title>
        <authorList>
            <person name="Copeland A."/>
            <person name="Lucas S."/>
            <person name="Lapidus A."/>
            <person name="Barry K."/>
            <person name="Glavina del Rio T."/>
            <person name="Dalin E."/>
            <person name="Tice H."/>
            <person name="Pitluck S."/>
            <person name="Lowry S."/>
            <person name="Clum A."/>
            <person name="Schmutz J."/>
            <person name="Larimer F."/>
            <person name="Land M."/>
            <person name="Hauser L."/>
            <person name="Kyrpides N."/>
            <person name="Kim E."/>
            <person name="Schleheck D."/>
            <person name="Richardson P."/>
        </authorList>
    </citation>
    <scope>NUCLEOTIDE SEQUENCE [LARGE SCALE GENOMIC DNA]</scope>
    <source>
        <strain>DSM 14801 / SPH-1</strain>
    </source>
</reference>
<feature type="chain" id="PRO_1000138950" description="Orotidine 5'-phosphate decarboxylase">
    <location>
        <begin position="1"/>
        <end position="275"/>
    </location>
</feature>
<feature type="active site" description="Proton donor" evidence="1">
    <location>
        <position position="95"/>
    </location>
</feature>
<keyword id="KW-0210">Decarboxylase</keyword>
<keyword id="KW-0456">Lyase</keyword>
<keyword id="KW-0665">Pyrimidine biosynthesis</keyword>
<keyword id="KW-1185">Reference proteome</keyword>
<gene>
    <name evidence="1" type="primary">pyrF</name>
    <name type="ordered locus">Daci_0824</name>
</gene>